<accession>P42537</accession>
<protein>
    <recommendedName>
        <fullName>Uncharacterized 9.6 kDa protein</fullName>
    </recommendedName>
    <alternativeName>
        <fullName>ORF2</fullName>
    </alternativeName>
</protein>
<sequence length="81" mass="9621">MSVLETIKVIWENISGYLQWIVPSLVILIIVVILASMKRGMTNFVLNIREIFSSKWWAFIFFILLFLFAIFWNDFRESIGM</sequence>
<dbReference type="EMBL" id="L13696">
    <property type="protein sequence ID" value="AAA87958.1"/>
    <property type="molecule type" value="Genomic_DNA"/>
</dbReference>
<dbReference type="RefSeq" id="NP_040810.1">
    <property type="nucleotide sequence ID" value="NC_001447.1"/>
</dbReference>
<dbReference type="SMR" id="P42537"/>
<dbReference type="TCDB" id="1.E.59.1.1">
    <property type="family name" value="the putative acholeplasma phage l2 holin (l2 holin) family"/>
</dbReference>
<dbReference type="GeneID" id="1261008"/>
<dbReference type="KEGG" id="vg:1261008"/>
<dbReference type="Proteomes" id="UP000001573">
    <property type="component" value="Genome"/>
</dbReference>
<keyword id="KW-1185">Reference proteome</keyword>
<organismHost>
    <name type="scientific">Mycoplasma</name>
    <dbReference type="NCBI Taxonomy" id="2093"/>
</organismHost>
<proteinExistence type="predicted"/>
<organism>
    <name type="scientific">Acholeplasma phage L2</name>
    <name type="common">Bacteriophage L2</name>
    <dbReference type="NCBI Taxonomy" id="46014"/>
    <lineage>
        <taxon>Viruses</taxon>
        <taxon>Viruses incertae sedis</taxon>
        <taxon>Plasmaviridae</taxon>
        <taxon>Plasmavirus</taxon>
    </lineage>
</organism>
<name>YO02_BPL2</name>
<reference key="1">
    <citation type="journal article" date="1994" name="Gene">
        <title>Sequence analysis of a unique temperature phage: mycoplasma virus L2.</title>
        <authorList>
            <person name="Maniloff J."/>
            <person name="Kampo G.J."/>
            <person name="Dascher C.C."/>
        </authorList>
    </citation>
    <scope>NUCLEOTIDE SEQUENCE [LARGE SCALE GENOMIC DNA]</scope>
</reference>
<feature type="chain" id="PRO_0000066349" description="Uncharacterized 9.6 kDa protein">
    <location>
        <begin position="1"/>
        <end position="81"/>
    </location>
</feature>